<sequence length="203" mass="21681">MSGLIGKKIGMTSIFDENGKNIPCTVIQAGPCVVTQVRTKEVDGYEALQLGFDDKKTVGKAAEGHAKKAGTVAKRKVVEFQGYNEDYKLGDSVTVEHFKEGEFVDIAGTSKGKGFQGVVKRHGFGGVGQATHGQHNRLRAPGSIGAASYPARVFKGMKMAGRMGGERVKIENLRVLKVVADKNLLVIKGCVPGSKNSYVIISK</sequence>
<comment type="function">
    <text evidence="1">One of the primary rRNA binding proteins, it binds directly near the 3'-end of the 23S rRNA, where it nucleates assembly of the 50S subunit.</text>
</comment>
<comment type="subunit">
    <text evidence="1">Part of the 50S ribosomal subunit. Forms a cluster with proteins L14 and L19.</text>
</comment>
<comment type="similarity">
    <text evidence="1">Belongs to the universal ribosomal protein uL3 family.</text>
</comment>
<protein>
    <recommendedName>
        <fullName evidence="1">Large ribosomal subunit protein uL3</fullName>
    </recommendedName>
    <alternativeName>
        <fullName evidence="2">50S ribosomal protein L3</fullName>
    </alternativeName>
</protein>
<reference key="1">
    <citation type="journal article" date="2006" name="Environ. Microbiol.">
        <title>Whole genome analysis of the marine Bacteroidetes'Gramella forsetii' reveals adaptations to degradation of polymeric organic matter.</title>
        <authorList>
            <person name="Bauer M."/>
            <person name="Kube M."/>
            <person name="Teeling H."/>
            <person name="Richter M."/>
            <person name="Lombardot T."/>
            <person name="Allers E."/>
            <person name="Wuerdemann C.A."/>
            <person name="Quast C."/>
            <person name="Kuhl H."/>
            <person name="Knaust F."/>
            <person name="Woebken D."/>
            <person name="Bischof K."/>
            <person name="Mussmann M."/>
            <person name="Choudhuri J.V."/>
            <person name="Meyer F."/>
            <person name="Reinhardt R."/>
            <person name="Amann R.I."/>
            <person name="Gloeckner F.O."/>
        </authorList>
    </citation>
    <scope>NUCLEOTIDE SEQUENCE [LARGE SCALE GENOMIC DNA]</scope>
    <source>
        <strain>DSM 17595 / CGMCC 1.15422 / KT0803</strain>
    </source>
</reference>
<keyword id="KW-0687">Ribonucleoprotein</keyword>
<keyword id="KW-0689">Ribosomal protein</keyword>
<keyword id="KW-0694">RNA-binding</keyword>
<keyword id="KW-0699">rRNA-binding</keyword>
<gene>
    <name evidence="1" type="primary">rplC</name>
    <name type="ordered locus">GFO_2839</name>
</gene>
<accession>A0M598</accession>
<feature type="chain" id="PRO_1000052057" description="Large ribosomal subunit protein uL3">
    <location>
        <begin position="1"/>
        <end position="203"/>
    </location>
</feature>
<proteinExistence type="inferred from homology"/>
<name>RL3_CHRFK</name>
<evidence type="ECO:0000255" key="1">
    <source>
        <dbReference type="HAMAP-Rule" id="MF_01325"/>
    </source>
</evidence>
<evidence type="ECO:0000305" key="2"/>
<organism>
    <name type="scientific">Christiangramia forsetii (strain DSM 17595 / CGMCC 1.15422 / KT0803)</name>
    <name type="common">Gramella forsetii</name>
    <dbReference type="NCBI Taxonomy" id="411154"/>
    <lineage>
        <taxon>Bacteria</taxon>
        <taxon>Pseudomonadati</taxon>
        <taxon>Bacteroidota</taxon>
        <taxon>Flavobacteriia</taxon>
        <taxon>Flavobacteriales</taxon>
        <taxon>Flavobacteriaceae</taxon>
        <taxon>Christiangramia</taxon>
    </lineage>
</organism>
<dbReference type="EMBL" id="CU207366">
    <property type="protein sequence ID" value="CAL67793.1"/>
    <property type="molecule type" value="Genomic_DNA"/>
</dbReference>
<dbReference type="RefSeq" id="WP_011710696.1">
    <property type="nucleotide sequence ID" value="NC_008571.1"/>
</dbReference>
<dbReference type="SMR" id="A0M598"/>
<dbReference type="STRING" id="411154.GFO_2839"/>
<dbReference type="KEGG" id="gfo:GFO_2839"/>
<dbReference type="eggNOG" id="COG0087">
    <property type="taxonomic scope" value="Bacteria"/>
</dbReference>
<dbReference type="HOGENOM" id="CLU_044142_4_1_10"/>
<dbReference type="OrthoDB" id="9806135at2"/>
<dbReference type="Proteomes" id="UP000000755">
    <property type="component" value="Chromosome"/>
</dbReference>
<dbReference type="GO" id="GO:1990904">
    <property type="term" value="C:ribonucleoprotein complex"/>
    <property type="evidence" value="ECO:0007669"/>
    <property type="project" value="UniProtKB-KW"/>
</dbReference>
<dbReference type="GO" id="GO:0005840">
    <property type="term" value="C:ribosome"/>
    <property type="evidence" value="ECO:0007669"/>
    <property type="project" value="UniProtKB-KW"/>
</dbReference>
<dbReference type="GO" id="GO:0019843">
    <property type="term" value="F:rRNA binding"/>
    <property type="evidence" value="ECO:0007669"/>
    <property type="project" value="UniProtKB-UniRule"/>
</dbReference>
<dbReference type="GO" id="GO:0003735">
    <property type="term" value="F:structural constituent of ribosome"/>
    <property type="evidence" value="ECO:0007669"/>
    <property type="project" value="InterPro"/>
</dbReference>
<dbReference type="GO" id="GO:0006412">
    <property type="term" value="P:translation"/>
    <property type="evidence" value="ECO:0007669"/>
    <property type="project" value="UniProtKB-UniRule"/>
</dbReference>
<dbReference type="FunFam" id="2.40.30.10:FF:000047">
    <property type="entry name" value="50S ribosomal protein L3"/>
    <property type="match status" value="1"/>
</dbReference>
<dbReference type="Gene3D" id="3.30.160.810">
    <property type="match status" value="1"/>
</dbReference>
<dbReference type="Gene3D" id="2.40.30.10">
    <property type="entry name" value="Translation factors"/>
    <property type="match status" value="1"/>
</dbReference>
<dbReference type="HAMAP" id="MF_01325_B">
    <property type="entry name" value="Ribosomal_uL3_B"/>
    <property type="match status" value="1"/>
</dbReference>
<dbReference type="InterPro" id="IPR000597">
    <property type="entry name" value="Ribosomal_uL3"/>
</dbReference>
<dbReference type="InterPro" id="IPR019927">
    <property type="entry name" value="Ribosomal_uL3_bac/org-type"/>
</dbReference>
<dbReference type="InterPro" id="IPR019926">
    <property type="entry name" value="Ribosomal_uL3_CS"/>
</dbReference>
<dbReference type="InterPro" id="IPR009000">
    <property type="entry name" value="Transl_B-barrel_sf"/>
</dbReference>
<dbReference type="NCBIfam" id="TIGR03625">
    <property type="entry name" value="L3_bact"/>
    <property type="match status" value="1"/>
</dbReference>
<dbReference type="PANTHER" id="PTHR11229">
    <property type="entry name" value="50S RIBOSOMAL PROTEIN L3"/>
    <property type="match status" value="1"/>
</dbReference>
<dbReference type="PANTHER" id="PTHR11229:SF16">
    <property type="entry name" value="LARGE RIBOSOMAL SUBUNIT PROTEIN UL3C"/>
    <property type="match status" value="1"/>
</dbReference>
<dbReference type="Pfam" id="PF00297">
    <property type="entry name" value="Ribosomal_L3"/>
    <property type="match status" value="1"/>
</dbReference>
<dbReference type="SUPFAM" id="SSF50447">
    <property type="entry name" value="Translation proteins"/>
    <property type="match status" value="1"/>
</dbReference>
<dbReference type="PROSITE" id="PS00474">
    <property type="entry name" value="RIBOSOMAL_L3"/>
    <property type="match status" value="1"/>
</dbReference>